<dbReference type="EC" id="2.6.1.9" evidence="1"/>
<dbReference type="EMBL" id="CP000083">
    <property type="protein sequence ID" value="AAZ26928.1"/>
    <property type="molecule type" value="Genomic_DNA"/>
</dbReference>
<dbReference type="SMR" id="Q47XB7"/>
<dbReference type="STRING" id="167879.CPS_3891"/>
<dbReference type="KEGG" id="cps:CPS_3891"/>
<dbReference type="HOGENOM" id="CLU_017584_3_1_6"/>
<dbReference type="UniPathway" id="UPA00031">
    <property type="reaction ID" value="UER00012"/>
</dbReference>
<dbReference type="Proteomes" id="UP000000547">
    <property type="component" value="Chromosome"/>
</dbReference>
<dbReference type="GO" id="GO:0004400">
    <property type="term" value="F:histidinol-phosphate transaminase activity"/>
    <property type="evidence" value="ECO:0007669"/>
    <property type="project" value="UniProtKB-UniRule"/>
</dbReference>
<dbReference type="GO" id="GO:0030170">
    <property type="term" value="F:pyridoxal phosphate binding"/>
    <property type="evidence" value="ECO:0007669"/>
    <property type="project" value="InterPro"/>
</dbReference>
<dbReference type="GO" id="GO:0000105">
    <property type="term" value="P:L-histidine biosynthetic process"/>
    <property type="evidence" value="ECO:0007669"/>
    <property type="project" value="UniProtKB-UniRule"/>
</dbReference>
<dbReference type="CDD" id="cd00609">
    <property type="entry name" value="AAT_like"/>
    <property type="match status" value="1"/>
</dbReference>
<dbReference type="Gene3D" id="3.90.1150.10">
    <property type="entry name" value="Aspartate Aminotransferase, domain 1"/>
    <property type="match status" value="1"/>
</dbReference>
<dbReference type="Gene3D" id="3.40.640.10">
    <property type="entry name" value="Type I PLP-dependent aspartate aminotransferase-like (Major domain)"/>
    <property type="match status" value="1"/>
</dbReference>
<dbReference type="HAMAP" id="MF_01023">
    <property type="entry name" value="HisC_aminotrans_2"/>
    <property type="match status" value="1"/>
</dbReference>
<dbReference type="InterPro" id="IPR001917">
    <property type="entry name" value="Aminotrans_II_pyridoxalP_BS"/>
</dbReference>
<dbReference type="InterPro" id="IPR004839">
    <property type="entry name" value="Aminotransferase_I/II_large"/>
</dbReference>
<dbReference type="InterPro" id="IPR005861">
    <property type="entry name" value="HisP_aminotrans"/>
</dbReference>
<dbReference type="InterPro" id="IPR015424">
    <property type="entry name" value="PyrdxlP-dep_Trfase"/>
</dbReference>
<dbReference type="InterPro" id="IPR015421">
    <property type="entry name" value="PyrdxlP-dep_Trfase_major"/>
</dbReference>
<dbReference type="InterPro" id="IPR015422">
    <property type="entry name" value="PyrdxlP-dep_Trfase_small"/>
</dbReference>
<dbReference type="NCBIfam" id="TIGR01141">
    <property type="entry name" value="hisC"/>
    <property type="match status" value="1"/>
</dbReference>
<dbReference type="PANTHER" id="PTHR42885:SF2">
    <property type="entry name" value="HISTIDINOL-PHOSPHATE AMINOTRANSFERASE"/>
    <property type="match status" value="1"/>
</dbReference>
<dbReference type="PANTHER" id="PTHR42885">
    <property type="entry name" value="HISTIDINOL-PHOSPHATE AMINOTRANSFERASE-RELATED"/>
    <property type="match status" value="1"/>
</dbReference>
<dbReference type="Pfam" id="PF00155">
    <property type="entry name" value="Aminotran_1_2"/>
    <property type="match status" value="1"/>
</dbReference>
<dbReference type="SUPFAM" id="SSF53383">
    <property type="entry name" value="PLP-dependent transferases"/>
    <property type="match status" value="1"/>
</dbReference>
<dbReference type="PROSITE" id="PS00599">
    <property type="entry name" value="AA_TRANSFER_CLASS_2"/>
    <property type="match status" value="1"/>
</dbReference>
<keyword id="KW-0028">Amino-acid biosynthesis</keyword>
<keyword id="KW-0032">Aminotransferase</keyword>
<keyword id="KW-0368">Histidine biosynthesis</keyword>
<keyword id="KW-0663">Pyridoxal phosphate</keyword>
<keyword id="KW-0808">Transferase</keyword>
<name>HIS8_COLP3</name>
<sequence length="368" mass="40920">MIDKLAREELVDMVPYQSARRLFASGDNEQANSRTWLNANEAPGQGQYQLSSENINRYPDFQPQALLKAYSNYCNLPVDNILATRGADEGIELIIRSFCRAYQDSVLICPPTYGMYAISAENHGAGIISVPLVNTPEAQCQLDLEGLKQQVGKAKVVFLCSPGNPTGNTLSSAQIKAAIEIFKDSAMVVVDEAYYEYTNKELGAEQVNIKLISQYDNVIILRTLSKAFALAGLRCGFTLSNKAVITLLSKVIAPYPIAAPVAEIASKVLTNDLDVMQARVISANSLREQLSEWLKQQKWCSDVFDSNANFVLFRCNNIDEKNKVFNLLVEHNILIRDQSKQQQLENCLRISIGSEDEIAQLKQLLETL</sequence>
<protein>
    <recommendedName>
        <fullName evidence="1">Histidinol-phosphate aminotransferase</fullName>
        <ecNumber evidence="1">2.6.1.9</ecNumber>
    </recommendedName>
    <alternativeName>
        <fullName evidence="1">Imidazole acetol-phosphate transaminase</fullName>
    </alternativeName>
</protein>
<comment type="catalytic activity">
    <reaction evidence="1">
        <text>L-histidinol phosphate + 2-oxoglutarate = 3-(imidazol-4-yl)-2-oxopropyl phosphate + L-glutamate</text>
        <dbReference type="Rhea" id="RHEA:23744"/>
        <dbReference type="ChEBI" id="CHEBI:16810"/>
        <dbReference type="ChEBI" id="CHEBI:29985"/>
        <dbReference type="ChEBI" id="CHEBI:57766"/>
        <dbReference type="ChEBI" id="CHEBI:57980"/>
        <dbReference type="EC" id="2.6.1.9"/>
    </reaction>
</comment>
<comment type="cofactor">
    <cofactor evidence="1">
        <name>pyridoxal 5'-phosphate</name>
        <dbReference type="ChEBI" id="CHEBI:597326"/>
    </cofactor>
</comment>
<comment type="pathway">
    <text evidence="1">Amino-acid biosynthesis; L-histidine biosynthesis; L-histidine from 5-phospho-alpha-D-ribose 1-diphosphate: step 7/9.</text>
</comment>
<comment type="subunit">
    <text evidence="1">Homodimer.</text>
</comment>
<comment type="similarity">
    <text evidence="1">Belongs to the class-II pyridoxal-phosphate-dependent aminotransferase family. Histidinol-phosphate aminotransferase subfamily.</text>
</comment>
<gene>
    <name evidence="1" type="primary">hisC</name>
    <name type="ordered locus">CPS_3891</name>
</gene>
<reference key="1">
    <citation type="journal article" date="2005" name="Proc. Natl. Acad. Sci. U.S.A.">
        <title>The psychrophilic lifestyle as revealed by the genome sequence of Colwellia psychrerythraea 34H through genomic and proteomic analyses.</title>
        <authorList>
            <person name="Methe B.A."/>
            <person name="Nelson K.E."/>
            <person name="Deming J.W."/>
            <person name="Momen B."/>
            <person name="Melamud E."/>
            <person name="Zhang X."/>
            <person name="Moult J."/>
            <person name="Madupu R."/>
            <person name="Nelson W.C."/>
            <person name="Dodson R.J."/>
            <person name="Brinkac L.M."/>
            <person name="Daugherty S.C."/>
            <person name="Durkin A.S."/>
            <person name="DeBoy R.T."/>
            <person name="Kolonay J.F."/>
            <person name="Sullivan S.A."/>
            <person name="Zhou L."/>
            <person name="Davidsen T.M."/>
            <person name="Wu M."/>
            <person name="Huston A.L."/>
            <person name="Lewis M."/>
            <person name="Weaver B."/>
            <person name="Weidman J.F."/>
            <person name="Khouri H."/>
            <person name="Utterback T.R."/>
            <person name="Feldblyum T.V."/>
            <person name="Fraser C.M."/>
        </authorList>
    </citation>
    <scope>NUCLEOTIDE SEQUENCE [LARGE SCALE GENOMIC DNA]</scope>
    <source>
        <strain>34H / ATCC BAA-681</strain>
    </source>
</reference>
<accession>Q47XB7</accession>
<feature type="chain" id="PRO_0000153347" description="Histidinol-phosphate aminotransferase">
    <location>
        <begin position="1"/>
        <end position="368"/>
    </location>
</feature>
<feature type="modified residue" description="N6-(pyridoxal phosphate)lysine" evidence="1">
    <location>
        <position position="226"/>
    </location>
</feature>
<organism>
    <name type="scientific">Colwellia psychrerythraea (strain 34H / ATCC BAA-681)</name>
    <name type="common">Vibrio psychroerythus</name>
    <dbReference type="NCBI Taxonomy" id="167879"/>
    <lineage>
        <taxon>Bacteria</taxon>
        <taxon>Pseudomonadati</taxon>
        <taxon>Pseudomonadota</taxon>
        <taxon>Gammaproteobacteria</taxon>
        <taxon>Alteromonadales</taxon>
        <taxon>Colwelliaceae</taxon>
        <taxon>Colwellia</taxon>
    </lineage>
</organism>
<evidence type="ECO:0000255" key="1">
    <source>
        <dbReference type="HAMAP-Rule" id="MF_01023"/>
    </source>
</evidence>
<proteinExistence type="inferred from homology"/>